<comment type="function">
    <text evidence="1">Part of the DNA-dependent RNA polymerase which catalyzes the transcription of viral DNA into RNA using the four ribonucleoside triphosphates as substrates. Responsible for the transcription of early, intermediate and late genes. DNA-dependent RNA polymerase associates with the early transcription factor (ETF) thereby allowing the early genes transcription. Late transcription, and probably also intermediate transcription, require newly synthesized RNA polymerase (By similarity).</text>
</comment>
<comment type="catalytic activity">
    <reaction>
        <text>RNA(n) + a ribonucleoside 5'-triphosphate = RNA(n+1) + diphosphate</text>
        <dbReference type="Rhea" id="RHEA:21248"/>
        <dbReference type="Rhea" id="RHEA-COMP:14527"/>
        <dbReference type="Rhea" id="RHEA-COMP:17342"/>
        <dbReference type="ChEBI" id="CHEBI:33019"/>
        <dbReference type="ChEBI" id="CHEBI:61557"/>
        <dbReference type="ChEBI" id="CHEBI:140395"/>
        <dbReference type="EC" id="2.7.7.6"/>
    </reaction>
</comment>
<comment type="subunit">
    <text evidence="1">The DNA-dependent RNA polymerase used for intermediate and late genes expression consists of eight subunits 147 kDa, 133 kDa, 35 kDa, 30 kDa, 22 kDa, 19 kDa, 18 kDa and 7 kDa totalling more than 500 kDa in mass. The same holoenzyme, with the addition of the transcription-specificity factor RAP94, is used for early gene expression (By similarity).</text>
</comment>
<comment type="subcellular location">
    <subcellularLocation>
        <location evidence="2">Virion</location>
    </subcellularLocation>
    <text evidence="1">All the enzymes and other proteins required to synthesize early mRNAs are packaged within the virion core along with the DNA genome. This is necessary because viral early mRNAs are synthesized within minutes after virus entry into the cell and are extruded through pores in the core particle (By similarity).</text>
</comment>
<comment type="induction">
    <text>Expressed in the early phase of the viral replicative cycle.</text>
</comment>
<comment type="similarity">
    <text evidence="2">Belongs to the poxviridae DNA-directed RNA polymerase 7 kDa subunit family.</text>
</comment>
<organism>
    <name type="scientific">Rabbit fibroma virus (strain Kasza)</name>
    <name type="common">RFV</name>
    <name type="synonym">Shope fibroma virus (strain Kasza)</name>
    <dbReference type="NCBI Taxonomy" id="10272"/>
    <lineage>
        <taxon>Viruses</taxon>
        <taxon>Varidnaviria</taxon>
        <taxon>Bamfordvirae</taxon>
        <taxon>Nucleocytoviricota</taxon>
        <taxon>Pokkesviricetes</taxon>
        <taxon>Chitovirales</taxon>
        <taxon>Poxviridae</taxon>
        <taxon>Chordopoxvirinae</taxon>
        <taxon>Leporipoxvirus</taxon>
        <taxon>Rabbit fibroma virus</taxon>
    </lineage>
</organism>
<keyword id="KW-0240">DNA-directed RNA polymerase</keyword>
<keyword id="KW-0244">Early protein</keyword>
<keyword id="KW-0548">Nucleotidyltransferase</keyword>
<keyword id="KW-1185">Reference proteome</keyword>
<keyword id="KW-0804">Transcription</keyword>
<keyword id="KW-0808">Transferase</keyword>
<keyword id="KW-0946">Virion</keyword>
<evidence type="ECO:0000250" key="1"/>
<evidence type="ECO:0000305" key="2"/>
<gene>
    <name type="primary">RPO7</name>
    <name type="ORF">s050R</name>
</gene>
<name>RP07_RFVKA</name>
<protein>
    <recommendedName>
        <fullName>DNA-directed RNA polymerase 7 kDa subunit</fullName>
        <ecNumber>2.7.7.6</ecNumber>
    </recommendedName>
</protein>
<sequence length="63" mass="7134">MVFQLICSTCGRDISEERFALLIKKIALKTVLKGVKNSCCRLKLSTQIEPQRNLTVEPLLDIN</sequence>
<feature type="chain" id="PRO_0000099163" description="DNA-directed RNA polymerase 7 kDa subunit">
    <location>
        <begin position="1"/>
        <end position="63"/>
    </location>
</feature>
<organismHost>
    <name type="scientific">Oryctolagus cuniculus</name>
    <name type="common">Rabbit</name>
    <dbReference type="NCBI Taxonomy" id="9986"/>
</organismHost>
<dbReference type="EC" id="2.7.7.6"/>
<dbReference type="EMBL" id="AF170722">
    <property type="protein sequence ID" value="AAF17932.1"/>
    <property type="molecule type" value="Genomic_DNA"/>
</dbReference>
<dbReference type="RefSeq" id="NP_051939.1">
    <property type="nucleotide sequence ID" value="NC_001266.1"/>
</dbReference>
<dbReference type="SMR" id="Q9Q921"/>
<dbReference type="KEGG" id="vg:1486893"/>
<dbReference type="Proteomes" id="UP000000868">
    <property type="component" value="Segment"/>
</dbReference>
<dbReference type="GO" id="GO:0000428">
    <property type="term" value="C:DNA-directed RNA polymerase complex"/>
    <property type="evidence" value="ECO:0007669"/>
    <property type="project" value="UniProtKB-KW"/>
</dbReference>
<dbReference type="GO" id="GO:0044423">
    <property type="term" value="C:virion component"/>
    <property type="evidence" value="ECO:0007669"/>
    <property type="project" value="UniProtKB-KW"/>
</dbReference>
<dbReference type="GO" id="GO:0003677">
    <property type="term" value="F:DNA binding"/>
    <property type="evidence" value="ECO:0007669"/>
    <property type="project" value="InterPro"/>
</dbReference>
<dbReference type="GO" id="GO:0003899">
    <property type="term" value="F:DNA-directed RNA polymerase activity"/>
    <property type="evidence" value="ECO:0007669"/>
    <property type="project" value="UniProtKB-EC"/>
</dbReference>
<dbReference type="GO" id="GO:0006351">
    <property type="term" value="P:DNA-templated transcription"/>
    <property type="evidence" value="ECO:0007669"/>
    <property type="project" value="InterPro"/>
</dbReference>
<dbReference type="InterPro" id="IPR008448">
    <property type="entry name" value="RNA_pol_7kDa_chordopoxvir"/>
</dbReference>
<dbReference type="Pfam" id="PF05864">
    <property type="entry name" value="Chordopox_RPO7"/>
    <property type="match status" value="1"/>
</dbReference>
<reference key="1">
    <citation type="journal article" date="1999" name="Virology">
        <title>The complete genome sequence of shope (Rabbit) fibroma virus.</title>
        <authorList>
            <person name="Willer D.O."/>
            <person name="McFadden G."/>
            <person name="Evans D.H."/>
        </authorList>
    </citation>
    <scope>NUCLEOTIDE SEQUENCE [LARGE SCALE GENOMIC DNA]</scope>
</reference>
<accession>Q9Q921</accession>
<proteinExistence type="evidence at transcript level"/>